<evidence type="ECO:0000255" key="1">
    <source>
        <dbReference type="HAMAP-Rule" id="MF_00101"/>
    </source>
</evidence>
<accession>B2V003</accession>
<reference key="1">
    <citation type="submission" date="2008-05" db="EMBL/GenBank/DDBJ databases">
        <title>Complete genome sequence of Clostridium botulinum E3 str. Alaska E43.</title>
        <authorList>
            <person name="Brinkac L.M."/>
            <person name="Brown J.L."/>
            <person name="Bruce D."/>
            <person name="Detter C."/>
            <person name="Munk C."/>
            <person name="Smith L.A."/>
            <person name="Smith T.J."/>
            <person name="Sutton G."/>
            <person name="Brettin T.S."/>
        </authorList>
    </citation>
    <scope>NUCLEOTIDE SEQUENCE [LARGE SCALE GENOMIC DNA]</scope>
    <source>
        <strain>Alaska E43 / Type E3</strain>
    </source>
</reference>
<proteinExistence type="inferred from homology"/>
<gene>
    <name evidence="1" type="primary">acpS</name>
    <name type="ordered locus">CLH_3112</name>
</gene>
<keyword id="KW-0963">Cytoplasm</keyword>
<keyword id="KW-0275">Fatty acid biosynthesis</keyword>
<keyword id="KW-0276">Fatty acid metabolism</keyword>
<keyword id="KW-0444">Lipid biosynthesis</keyword>
<keyword id="KW-0443">Lipid metabolism</keyword>
<keyword id="KW-0460">Magnesium</keyword>
<keyword id="KW-0479">Metal-binding</keyword>
<keyword id="KW-0808">Transferase</keyword>
<protein>
    <recommendedName>
        <fullName evidence="1">Holo-[acyl-carrier-protein] synthase</fullName>
        <shortName evidence="1">Holo-ACP synthase</shortName>
        <ecNumber evidence="1">2.7.8.7</ecNumber>
    </recommendedName>
    <alternativeName>
        <fullName evidence="1">4'-phosphopantetheinyl transferase AcpS</fullName>
    </alternativeName>
</protein>
<comment type="function">
    <text evidence="1">Transfers the 4'-phosphopantetheine moiety from coenzyme A to a Ser of acyl-carrier-protein.</text>
</comment>
<comment type="catalytic activity">
    <reaction evidence="1">
        <text>apo-[ACP] + CoA = holo-[ACP] + adenosine 3',5'-bisphosphate + H(+)</text>
        <dbReference type="Rhea" id="RHEA:12068"/>
        <dbReference type="Rhea" id="RHEA-COMP:9685"/>
        <dbReference type="Rhea" id="RHEA-COMP:9690"/>
        <dbReference type="ChEBI" id="CHEBI:15378"/>
        <dbReference type="ChEBI" id="CHEBI:29999"/>
        <dbReference type="ChEBI" id="CHEBI:57287"/>
        <dbReference type="ChEBI" id="CHEBI:58343"/>
        <dbReference type="ChEBI" id="CHEBI:64479"/>
        <dbReference type="EC" id="2.7.8.7"/>
    </reaction>
</comment>
<comment type="cofactor">
    <cofactor evidence="1">
        <name>Mg(2+)</name>
        <dbReference type="ChEBI" id="CHEBI:18420"/>
    </cofactor>
</comment>
<comment type="subcellular location">
    <subcellularLocation>
        <location evidence="1">Cytoplasm</location>
    </subcellularLocation>
</comment>
<comment type="similarity">
    <text evidence="1">Belongs to the P-Pant transferase superfamily. AcpS family.</text>
</comment>
<sequence length="123" mass="13930">MIKGIGTDIVEIERIKKAIESNPNFINRFFTEKEIEYFKLRKFNANTISGNFAAKEAVSKALGSGFRGFGLMDIEVLRDELGKPIVNLSDKLYKMFNLDNYNIFISISHSNTDAIAYAIIEVI</sequence>
<dbReference type="EC" id="2.7.8.7" evidence="1"/>
<dbReference type="EMBL" id="CP001078">
    <property type="protein sequence ID" value="ACD52228.1"/>
    <property type="molecule type" value="Genomic_DNA"/>
</dbReference>
<dbReference type="RefSeq" id="WP_012450419.1">
    <property type="nucleotide sequence ID" value="NC_010723.1"/>
</dbReference>
<dbReference type="SMR" id="B2V003"/>
<dbReference type="KEGG" id="cbt:CLH_3112"/>
<dbReference type="HOGENOM" id="CLU_089696_0_2_9"/>
<dbReference type="GO" id="GO:0005737">
    <property type="term" value="C:cytoplasm"/>
    <property type="evidence" value="ECO:0007669"/>
    <property type="project" value="UniProtKB-SubCell"/>
</dbReference>
<dbReference type="GO" id="GO:0008897">
    <property type="term" value="F:holo-[acyl-carrier-protein] synthase activity"/>
    <property type="evidence" value="ECO:0007669"/>
    <property type="project" value="UniProtKB-UniRule"/>
</dbReference>
<dbReference type="GO" id="GO:0000287">
    <property type="term" value="F:magnesium ion binding"/>
    <property type="evidence" value="ECO:0007669"/>
    <property type="project" value="UniProtKB-UniRule"/>
</dbReference>
<dbReference type="GO" id="GO:0006633">
    <property type="term" value="P:fatty acid biosynthetic process"/>
    <property type="evidence" value="ECO:0007669"/>
    <property type="project" value="UniProtKB-UniRule"/>
</dbReference>
<dbReference type="Gene3D" id="3.90.470.20">
    <property type="entry name" value="4'-phosphopantetheinyl transferase domain"/>
    <property type="match status" value="1"/>
</dbReference>
<dbReference type="HAMAP" id="MF_00101">
    <property type="entry name" value="AcpS"/>
    <property type="match status" value="1"/>
</dbReference>
<dbReference type="InterPro" id="IPR008278">
    <property type="entry name" value="4-PPantetheinyl_Trfase_dom"/>
</dbReference>
<dbReference type="InterPro" id="IPR037143">
    <property type="entry name" value="4-PPantetheinyl_Trfase_dom_sf"/>
</dbReference>
<dbReference type="InterPro" id="IPR002582">
    <property type="entry name" value="ACPS"/>
</dbReference>
<dbReference type="InterPro" id="IPR004568">
    <property type="entry name" value="Ppantetheine-prot_Trfase_dom"/>
</dbReference>
<dbReference type="NCBIfam" id="TIGR00516">
    <property type="entry name" value="acpS"/>
    <property type="match status" value="1"/>
</dbReference>
<dbReference type="NCBIfam" id="TIGR00556">
    <property type="entry name" value="pantethn_trn"/>
    <property type="match status" value="1"/>
</dbReference>
<dbReference type="Pfam" id="PF01648">
    <property type="entry name" value="ACPS"/>
    <property type="match status" value="1"/>
</dbReference>
<dbReference type="SUPFAM" id="SSF56214">
    <property type="entry name" value="4'-phosphopantetheinyl transferase"/>
    <property type="match status" value="1"/>
</dbReference>
<feature type="chain" id="PRO_1000093869" description="Holo-[acyl-carrier-protein] synthase">
    <location>
        <begin position="1"/>
        <end position="123"/>
    </location>
</feature>
<feature type="binding site" evidence="1">
    <location>
        <position position="8"/>
    </location>
    <ligand>
        <name>Mg(2+)</name>
        <dbReference type="ChEBI" id="CHEBI:18420"/>
    </ligand>
</feature>
<feature type="binding site" evidence="1">
    <location>
        <position position="56"/>
    </location>
    <ligand>
        <name>Mg(2+)</name>
        <dbReference type="ChEBI" id="CHEBI:18420"/>
    </ligand>
</feature>
<organism>
    <name type="scientific">Clostridium botulinum (strain Alaska E43 / Type E3)</name>
    <dbReference type="NCBI Taxonomy" id="508767"/>
    <lineage>
        <taxon>Bacteria</taxon>
        <taxon>Bacillati</taxon>
        <taxon>Bacillota</taxon>
        <taxon>Clostridia</taxon>
        <taxon>Eubacteriales</taxon>
        <taxon>Clostridiaceae</taxon>
        <taxon>Clostridium</taxon>
    </lineage>
</organism>
<name>ACPS_CLOBA</name>